<dbReference type="EC" id="2.2.1.9" evidence="1"/>
<dbReference type="EMBL" id="AP011115">
    <property type="protein sequence ID" value="BAH49918.1"/>
    <property type="molecule type" value="Genomic_DNA"/>
</dbReference>
<dbReference type="RefSeq" id="WP_012688881.1">
    <property type="nucleotide sequence ID" value="NC_012522.1"/>
</dbReference>
<dbReference type="SMR" id="C1AYZ0"/>
<dbReference type="STRING" id="632772.ROP_16710"/>
<dbReference type="KEGG" id="rop:ROP_16710"/>
<dbReference type="PATRIC" id="fig|632772.20.peg.1752"/>
<dbReference type="HOGENOM" id="CLU_006051_4_0_11"/>
<dbReference type="OrthoDB" id="9791859at2"/>
<dbReference type="UniPathway" id="UPA00079"/>
<dbReference type="UniPathway" id="UPA01057">
    <property type="reaction ID" value="UER00164"/>
</dbReference>
<dbReference type="Proteomes" id="UP000002212">
    <property type="component" value="Chromosome"/>
</dbReference>
<dbReference type="GO" id="GO:0070204">
    <property type="term" value="F:2-succinyl-5-enolpyruvyl-6-hydroxy-3-cyclohexene-1-carboxylic-acid synthase activity"/>
    <property type="evidence" value="ECO:0007669"/>
    <property type="project" value="UniProtKB-UniRule"/>
</dbReference>
<dbReference type="GO" id="GO:0000287">
    <property type="term" value="F:magnesium ion binding"/>
    <property type="evidence" value="ECO:0007669"/>
    <property type="project" value="UniProtKB-UniRule"/>
</dbReference>
<dbReference type="GO" id="GO:0030145">
    <property type="term" value="F:manganese ion binding"/>
    <property type="evidence" value="ECO:0007669"/>
    <property type="project" value="UniProtKB-UniRule"/>
</dbReference>
<dbReference type="GO" id="GO:0030976">
    <property type="term" value="F:thiamine pyrophosphate binding"/>
    <property type="evidence" value="ECO:0007669"/>
    <property type="project" value="UniProtKB-UniRule"/>
</dbReference>
<dbReference type="GO" id="GO:0009234">
    <property type="term" value="P:menaquinone biosynthetic process"/>
    <property type="evidence" value="ECO:0007669"/>
    <property type="project" value="UniProtKB-UniRule"/>
</dbReference>
<dbReference type="CDD" id="cd07037">
    <property type="entry name" value="TPP_PYR_MenD"/>
    <property type="match status" value="1"/>
</dbReference>
<dbReference type="CDD" id="cd02009">
    <property type="entry name" value="TPP_SHCHC_synthase"/>
    <property type="match status" value="1"/>
</dbReference>
<dbReference type="Gene3D" id="3.40.50.970">
    <property type="match status" value="2"/>
</dbReference>
<dbReference type="HAMAP" id="MF_01659">
    <property type="entry name" value="MenD"/>
    <property type="match status" value="1"/>
</dbReference>
<dbReference type="InterPro" id="IPR004433">
    <property type="entry name" value="MenaQ_synth_MenD"/>
</dbReference>
<dbReference type="InterPro" id="IPR029061">
    <property type="entry name" value="THDP-binding"/>
</dbReference>
<dbReference type="InterPro" id="IPR012001">
    <property type="entry name" value="Thiamin_PyroP_enz_TPP-bd_dom"/>
</dbReference>
<dbReference type="InterPro" id="IPR011766">
    <property type="entry name" value="TPP_enzyme_TPP-bd"/>
</dbReference>
<dbReference type="NCBIfam" id="TIGR00173">
    <property type="entry name" value="menD"/>
    <property type="match status" value="1"/>
</dbReference>
<dbReference type="PANTHER" id="PTHR42916">
    <property type="entry name" value="2-SUCCINYL-5-ENOLPYRUVYL-6-HYDROXY-3-CYCLOHEXENE-1-CARBOXYLATE SYNTHASE"/>
    <property type="match status" value="1"/>
</dbReference>
<dbReference type="PANTHER" id="PTHR42916:SF1">
    <property type="entry name" value="PROTEIN PHYLLO, CHLOROPLASTIC"/>
    <property type="match status" value="1"/>
</dbReference>
<dbReference type="Pfam" id="PF02775">
    <property type="entry name" value="TPP_enzyme_C"/>
    <property type="match status" value="1"/>
</dbReference>
<dbReference type="Pfam" id="PF02776">
    <property type="entry name" value="TPP_enzyme_N"/>
    <property type="match status" value="1"/>
</dbReference>
<dbReference type="PIRSF" id="PIRSF004983">
    <property type="entry name" value="MenD"/>
    <property type="match status" value="1"/>
</dbReference>
<dbReference type="SUPFAM" id="SSF52518">
    <property type="entry name" value="Thiamin diphosphate-binding fold (THDP-binding)"/>
    <property type="match status" value="2"/>
</dbReference>
<reference key="1">
    <citation type="submission" date="2009-03" db="EMBL/GenBank/DDBJ databases">
        <title>Comparison of the complete genome sequences of Rhodococcus erythropolis PR4 and Rhodococcus opacus B4.</title>
        <authorList>
            <person name="Takarada H."/>
            <person name="Sekine M."/>
            <person name="Hosoyama A."/>
            <person name="Yamada R."/>
            <person name="Fujisawa T."/>
            <person name="Omata S."/>
            <person name="Shimizu A."/>
            <person name="Tsukatani N."/>
            <person name="Tanikawa S."/>
            <person name="Fujita N."/>
            <person name="Harayama S."/>
        </authorList>
    </citation>
    <scope>NUCLEOTIDE SEQUENCE [LARGE SCALE GENOMIC DNA]</scope>
    <source>
        <strain>B4</strain>
    </source>
</reference>
<name>MEND_RHOOB</name>
<keyword id="KW-0460">Magnesium</keyword>
<keyword id="KW-0464">Manganese</keyword>
<keyword id="KW-0474">Menaquinone biosynthesis</keyword>
<keyword id="KW-0479">Metal-binding</keyword>
<keyword id="KW-0786">Thiamine pyrophosphate</keyword>
<keyword id="KW-0808">Transferase</keyword>
<proteinExistence type="inferred from homology"/>
<gene>
    <name evidence="1" type="primary">menD</name>
    <name type="ordered locus">ROP_16710</name>
</gene>
<organism>
    <name type="scientific">Rhodococcus opacus (strain B4)</name>
    <dbReference type="NCBI Taxonomy" id="632772"/>
    <lineage>
        <taxon>Bacteria</taxon>
        <taxon>Bacillati</taxon>
        <taxon>Actinomycetota</taxon>
        <taxon>Actinomycetes</taxon>
        <taxon>Mycobacteriales</taxon>
        <taxon>Nocardiaceae</taxon>
        <taxon>Rhodococcus</taxon>
    </lineage>
</organism>
<sequence>MNPSTAQATAVVDELVRGGVREVVLCPGSRNAPLAFALQAADLEGRLRLHMRIDERTAGFLALGLAVAGKRPVPIVMTSGTAVANLGPAVLEANYARVPLVVLSANRPYEMLGTGANQTIEQLGLFGSQVRATISLGLAEDDAGQNSQWRSAVCRVLAAARGTRSGNAGPVHFDIPLREPLVPDVHAQGPVPQGRPGGAAWTTTQHATLDVAMDLDITPDTIVISGHGSALRPELAGLPTVAEPTAPLHGIPVHPMALPQLKPRQAVITGRPTLHRSVSKVLADPAVAVYALTTGPRWPDVSGNVLATGTRAVVTGAPDRAWINRCRTLSEHTDKAVRAQLAAHPKATGLHVAAAVMDALTDGDQLLLGASNPVRDAALVSYPAPKVRVLSNRGVAGIDGTVSAAVGAALAYEEGRTVALLGDLTFLHDASGLLIGSGEPRPRDLTIVVANDDGGGIFELLEQGDPQYAGVFERVFGTPHGMDLAALCAAYRVEHHLVGLGELSTLLSTPDAPGDRGIRVLEVTTERSGLRELHAAVRAQL</sequence>
<accession>C1AYZ0</accession>
<comment type="function">
    <text evidence="1">Catalyzes the thiamine diphosphate-dependent decarboxylation of 2-oxoglutarate and the subsequent addition of the resulting succinic semialdehyde-thiamine pyrophosphate anion to isochorismate to yield 2-succinyl-5-enolpyruvyl-6-hydroxy-3-cyclohexene-1-carboxylate (SEPHCHC).</text>
</comment>
<comment type="catalytic activity">
    <reaction evidence="1">
        <text>isochorismate + 2-oxoglutarate + H(+) = 5-enolpyruvoyl-6-hydroxy-2-succinyl-cyclohex-3-ene-1-carboxylate + CO2</text>
        <dbReference type="Rhea" id="RHEA:25593"/>
        <dbReference type="ChEBI" id="CHEBI:15378"/>
        <dbReference type="ChEBI" id="CHEBI:16526"/>
        <dbReference type="ChEBI" id="CHEBI:16810"/>
        <dbReference type="ChEBI" id="CHEBI:29780"/>
        <dbReference type="ChEBI" id="CHEBI:58818"/>
        <dbReference type="EC" id="2.2.1.9"/>
    </reaction>
</comment>
<comment type="cofactor">
    <cofactor evidence="1">
        <name>Mg(2+)</name>
        <dbReference type="ChEBI" id="CHEBI:18420"/>
    </cofactor>
    <cofactor evidence="1">
        <name>Mn(2+)</name>
        <dbReference type="ChEBI" id="CHEBI:29035"/>
    </cofactor>
</comment>
<comment type="cofactor">
    <cofactor evidence="1">
        <name>thiamine diphosphate</name>
        <dbReference type="ChEBI" id="CHEBI:58937"/>
    </cofactor>
    <text evidence="1">Binds 1 thiamine pyrophosphate per subunit.</text>
</comment>
<comment type="pathway">
    <text evidence="1">Quinol/quinone metabolism; 1,4-dihydroxy-2-naphthoate biosynthesis; 1,4-dihydroxy-2-naphthoate from chorismate: step 2/7.</text>
</comment>
<comment type="pathway">
    <text evidence="1">Quinol/quinone metabolism; menaquinone biosynthesis.</text>
</comment>
<comment type="subunit">
    <text evidence="1">Homodimer.</text>
</comment>
<comment type="similarity">
    <text evidence="1">Belongs to the TPP enzyme family. MenD subfamily.</text>
</comment>
<feature type="chain" id="PRO_1000187087" description="2-succinyl-5-enolpyruvyl-6-hydroxy-3-cyclohexene-1-carboxylate synthase">
    <location>
        <begin position="1"/>
        <end position="541"/>
    </location>
</feature>
<protein>
    <recommendedName>
        <fullName evidence="1">2-succinyl-5-enolpyruvyl-6-hydroxy-3-cyclohexene-1-carboxylate synthase</fullName>
        <shortName evidence="1">SEPHCHC synthase</shortName>
        <ecNumber evidence="1">2.2.1.9</ecNumber>
    </recommendedName>
    <alternativeName>
        <fullName evidence="1">Menaquinone biosynthesis protein MenD</fullName>
    </alternativeName>
</protein>
<evidence type="ECO:0000255" key="1">
    <source>
        <dbReference type="HAMAP-Rule" id="MF_01659"/>
    </source>
</evidence>